<protein>
    <recommendedName>
        <fullName evidence="1">Large ribosomal subunit protein uL2</fullName>
    </recommendedName>
    <alternativeName>
        <fullName evidence="3">50S ribosomal protein L2</fullName>
    </alternativeName>
</protein>
<gene>
    <name evidence="1" type="primary">rplB</name>
    <name type="ordered locus">MSC_0742</name>
</gene>
<name>RL2_MYCMS</name>
<dbReference type="EMBL" id="BX293980">
    <property type="protein sequence ID" value="CAE77360.1"/>
    <property type="molecule type" value="Genomic_DNA"/>
</dbReference>
<dbReference type="RefSeq" id="NP_975718.1">
    <property type="nucleotide sequence ID" value="NC_005364.2"/>
</dbReference>
<dbReference type="RefSeq" id="WP_011166910.1">
    <property type="nucleotide sequence ID" value="NC_005364.2"/>
</dbReference>
<dbReference type="SMR" id="Q6MSM8"/>
<dbReference type="STRING" id="272632.MSC_0742"/>
<dbReference type="KEGG" id="mmy:MSC_0742"/>
<dbReference type="PATRIC" id="fig|272632.4.peg.799"/>
<dbReference type="eggNOG" id="COG0090">
    <property type="taxonomic scope" value="Bacteria"/>
</dbReference>
<dbReference type="HOGENOM" id="CLU_036235_2_1_14"/>
<dbReference type="Proteomes" id="UP000001016">
    <property type="component" value="Chromosome"/>
</dbReference>
<dbReference type="GO" id="GO:0015934">
    <property type="term" value="C:large ribosomal subunit"/>
    <property type="evidence" value="ECO:0007669"/>
    <property type="project" value="InterPro"/>
</dbReference>
<dbReference type="GO" id="GO:0019843">
    <property type="term" value="F:rRNA binding"/>
    <property type="evidence" value="ECO:0007669"/>
    <property type="project" value="UniProtKB-UniRule"/>
</dbReference>
<dbReference type="GO" id="GO:0003735">
    <property type="term" value="F:structural constituent of ribosome"/>
    <property type="evidence" value="ECO:0007669"/>
    <property type="project" value="InterPro"/>
</dbReference>
<dbReference type="GO" id="GO:0016740">
    <property type="term" value="F:transferase activity"/>
    <property type="evidence" value="ECO:0007669"/>
    <property type="project" value="InterPro"/>
</dbReference>
<dbReference type="GO" id="GO:0002181">
    <property type="term" value="P:cytoplasmic translation"/>
    <property type="evidence" value="ECO:0007669"/>
    <property type="project" value="TreeGrafter"/>
</dbReference>
<dbReference type="FunFam" id="2.30.30.30:FF:000001">
    <property type="entry name" value="50S ribosomal protein L2"/>
    <property type="match status" value="1"/>
</dbReference>
<dbReference type="FunFam" id="2.40.50.140:FF:000003">
    <property type="entry name" value="50S ribosomal protein L2"/>
    <property type="match status" value="1"/>
</dbReference>
<dbReference type="FunFam" id="4.10.950.10:FF:000001">
    <property type="entry name" value="50S ribosomal protein L2"/>
    <property type="match status" value="1"/>
</dbReference>
<dbReference type="Gene3D" id="2.30.30.30">
    <property type="match status" value="1"/>
</dbReference>
<dbReference type="Gene3D" id="2.40.50.140">
    <property type="entry name" value="Nucleic acid-binding proteins"/>
    <property type="match status" value="1"/>
</dbReference>
<dbReference type="Gene3D" id="4.10.950.10">
    <property type="entry name" value="Ribosomal protein L2, domain 3"/>
    <property type="match status" value="1"/>
</dbReference>
<dbReference type="HAMAP" id="MF_01320_B">
    <property type="entry name" value="Ribosomal_uL2_B"/>
    <property type="match status" value="1"/>
</dbReference>
<dbReference type="InterPro" id="IPR012340">
    <property type="entry name" value="NA-bd_OB-fold"/>
</dbReference>
<dbReference type="InterPro" id="IPR014722">
    <property type="entry name" value="Rib_uL2_dom2"/>
</dbReference>
<dbReference type="InterPro" id="IPR002171">
    <property type="entry name" value="Ribosomal_uL2"/>
</dbReference>
<dbReference type="InterPro" id="IPR005880">
    <property type="entry name" value="Ribosomal_uL2_bac/org-type"/>
</dbReference>
<dbReference type="InterPro" id="IPR022669">
    <property type="entry name" value="Ribosomal_uL2_C"/>
</dbReference>
<dbReference type="InterPro" id="IPR022671">
    <property type="entry name" value="Ribosomal_uL2_CS"/>
</dbReference>
<dbReference type="InterPro" id="IPR014726">
    <property type="entry name" value="Ribosomal_uL2_dom3"/>
</dbReference>
<dbReference type="InterPro" id="IPR022666">
    <property type="entry name" value="Ribosomal_uL2_RNA-bd_dom"/>
</dbReference>
<dbReference type="InterPro" id="IPR008991">
    <property type="entry name" value="Translation_prot_SH3-like_sf"/>
</dbReference>
<dbReference type="NCBIfam" id="TIGR01171">
    <property type="entry name" value="rplB_bact"/>
    <property type="match status" value="1"/>
</dbReference>
<dbReference type="PANTHER" id="PTHR13691:SF5">
    <property type="entry name" value="LARGE RIBOSOMAL SUBUNIT PROTEIN UL2M"/>
    <property type="match status" value="1"/>
</dbReference>
<dbReference type="PANTHER" id="PTHR13691">
    <property type="entry name" value="RIBOSOMAL PROTEIN L2"/>
    <property type="match status" value="1"/>
</dbReference>
<dbReference type="Pfam" id="PF00181">
    <property type="entry name" value="Ribosomal_L2"/>
    <property type="match status" value="1"/>
</dbReference>
<dbReference type="Pfam" id="PF03947">
    <property type="entry name" value="Ribosomal_L2_C"/>
    <property type="match status" value="1"/>
</dbReference>
<dbReference type="PIRSF" id="PIRSF002158">
    <property type="entry name" value="Ribosomal_L2"/>
    <property type="match status" value="1"/>
</dbReference>
<dbReference type="SMART" id="SM01383">
    <property type="entry name" value="Ribosomal_L2"/>
    <property type="match status" value="1"/>
</dbReference>
<dbReference type="SMART" id="SM01382">
    <property type="entry name" value="Ribosomal_L2_C"/>
    <property type="match status" value="1"/>
</dbReference>
<dbReference type="SUPFAM" id="SSF50249">
    <property type="entry name" value="Nucleic acid-binding proteins"/>
    <property type="match status" value="1"/>
</dbReference>
<dbReference type="SUPFAM" id="SSF50104">
    <property type="entry name" value="Translation proteins SH3-like domain"/>
    <property type="match status" value="1"/>
</dbReference>
<dbReference type="PROSITE" id="PS00467">
    <property type="entry name" value="RIBOSOMAL_L2"/>
    <property type="match status" value="1"/>
</dbReference>
<organism>
    <name type="scientific">Mycoplasma mycoides subsp. mycoides SC (strain CCUG 32753 / NCTC 10114 / PG1)</name>
    <dbReference type="NCBI Taxonomy" id="272632"/>
    <lineage>
        <taxon>Bacteria</taxon>
        <taxon>Bacillati</taxon>
        <taxon>Mycoplasmatota</taxon>
        <taxon>Mollicutes</taxon>
        <taxon>Mycoplasmataceae</taxon>
        <taxon>Mycoplasma</taxon>
    </lineage>
</organism>
<feature type="chain" id="PRO_0000237212" description="Large ribosomal subunit protein uL2">
    <location>
        <begin position="1"/>
        <end position="282"/>
    </location>
</feature>
<feature type="region of interest" description="Disordered" evidence="2">
    <location>
        <begin position="223"/>
        <end position="282"/>
    </location>
</feature>
<keyword id="KW-1185">Reference proteome</keyword>
<keyword id="KW-0687">Ribonucleoprotein</keyword>
<keyword id="KW-0689">Ribosomal protein</keyword>
<keyword id="KW-0694">RNA-binding</keyword>
<keyword id="KW-0699">rRNA-binding</keyword>
<reference key="1">
    <citation type="journal article" date="2004" name="Genome Res.">
        <title>The genome sequence of Mycoplasma mycoides subsp. mycoides SC type strain PG1T, the causative agent of contagious bovine pleuropneumonia (CBPP).</title>
        <authorList>
            <person name="Westberg J."/>
            <person name="Persson A."/>
            <person name="Holmberg A."/>
            <person name="Goesmann A."/>
            <person name="Lundeberg J."/>
            <person name="Johansson K.-E."/>
            <person name="Pettersson B."/>
            <person name="Uhlen M."/>
        </authorList>
    </citation>
    <scope>NUCLEOTIDE SEQUENCE [LARGE SCALE GENOMIC DNA]</scope>
    <source>
        <strain>CCUG 32753 / NCTC 10114 / PG1</strain>
    </source>
</reference>
<comment type="function">
    <text evidence="1">One of the primary rRNA binding proteins. Required for association of the 30S and 50S subunits to form the 70S ribosome, for tRNA binding and peptide bond formation. It has been suggested to have peptidyltransferase activity; this is somewhat controversial. Makes several contacts with the 16S rRNA in the 70S ribosome.</text>
</comment>
<comment type="subunit">
    <text evidence="1">Part of the 50S ribosomal subunit. Forms a bridge to the 30S subunit in the 70S ribosome.</text>
</comment>
<comment type="similarity">
    <text evidence="1">Belongs to the universal ribosomal protein uL2 family.</text>
</comment>
<sequence>MAIKKYKSTTNGRRNMTTIDYSAVLTTKNNPEKSLVVSKNSKAGRNNRGLITTRHKGGGHKQKYRIIDFKRNKRDIFGTISTIEYDPNRNAFICLINYVDGEKRYILFAKGMQVGMKVVASENADIKVGNVAPLKNIPEGTLLHNVELKPGKGGQIARSAGSSVQLLGKDDDGKYVTLRLSSGEVRKVLAECYATIGEVGNEEYNLVNWGKAGRNRWRGIRPTVRGSVMNPNDHPHGGGEGRAPIGRKSPVTPWGKKALGVKTRNTKKTSEKLIVRKRSNKK</sequence>
<proteinExistence type="inferred from homology"/>
<evidence type="ECO:0000255" key="1">
    <source>
        <dbReference type="HAMAP-Rule" id="MF_01320"/>
    </source>
</evidence>
<evidence type="ECO:0000256" key="2">
    <source>
        <dbReference type="SAM" id="MobiDB-lite"/>
    </source>
</evidence>
<evidence type="ECO:0000305" key="3"/>
<accession>Q6MSM8</accession>